<dbReference type="EC" id="3.1.1.4"/>
<dbReference type="EMBL" id="AF015247">
    <property type="protein sequence ID" value="AAB71849.1"/>
    <property type="molecule type" value="mRNA"/>
</dbReference>
<dbReference type="SMR" id="O42192"/>
<dbReference type="GO" id="GO:0005576">
    <property type="term" value="C:extracellular region"/>
    <property type="evidence" value="ECO:0007669"/>
    <property type="project" value="UniProtKB-SubCell"/>
</dbReference>
<dbReference type="GO" id="GO:0005509">
    <property type="term" value="F:calcium ion binding"/>
    <property type="evidence" value="ECO:0007669"/>
    <property type="project" value="InterPro"/>
</dbReference>
<dbReference type="GO" id="GO:0047498">
    <property type="term" value="F:calcium-dependent phospholipase A2 activity"/>
    <property type="evidence" value="ECO:0007669"/>
    <property type="project" value="TreeGrafter"/>
</dbReference>
<dbReference type="GO" id="GO:0005543">
    <property type="term" value="F:phospholipid binding"/>
    <property type="evidence" value="ECO:0007669"/>
    <property type="project" value="TreeGrafter"/>
</dbReference>
<dbReference type="GO" id="GO:0050482">
    <property type="term" value="P:arachidonate secretion"/>
    <property type="evidence" value="ECO:0007669"/>
    <property type="project" value="InterPro"/>
</dbReference>
<dbReference type="GO" id="GO:0016042">
    <property type="term" value="P:lipid catabolic process"/>
    <property type="evidence" value="ECO:0007669"/>
    <property type="project" value="UniProtKB-KW"/>
</dbReference>
<dbReference type="GO" id="GO:0042130">
    <property type="term" value="P:negative regulation of T cell proliferation"/>
    <property type="evidence" value="ECO:0007669"/>
    <property type="project" value="TreeGrafter"/>
</dbReference>
<dbReference type="GO" id="GO:0006644">
    <property type="term" value="P:phospholipid metabolic process"/>
    <property type="evidence" value="ECO:0007669"/>
    <property type="project" value="InterPro"/>
</dbReference>
<dbReference type="CDD" id="cd00125">
    <property type="entry name" value="PLA2c"/>
    <property type="match status" value="1"/>
</dbReference>
<dbReference type="FunFam" id="1.20.90.10:FF:000001">
    <property type="entry name" value="Basic phospholipase A2 homolog"/>
    <property type="match status" value="1"/>
</dbReference>
<dbReference type="Gene3D" id="1.20.90.10">
    <property type="entry name" value="Phospholipase A2 domain"/>
    <property type="match status" value="1"/>
</dbReference>
<dbReference type="InterPro" id="IPR001211">
    <property type="entry name" value="PLipase_A2"/>
</dbReference>
<dbReference type="InterPro" id="IPR033112">
    <property type="entry name" value="PLipase_A2_Asp_AS"/>
</dbReference>
<dbReference type="InterPro" id="IPR016090">
    <property type="entry name" value="PLipase_A2_dom"/>
</dbReference>
<dbReference type="InterPro" id="IPR036444">
    <property type="entry name" value="PLipase_A2_dom_sf"/>
</dbReference>
<dbReference type="InterPro" id="IPR033113">
    <property type="entry name" value="PLipase_A2_His_AS"/>
</dbReference>
<dbReference type="PANTHER" id="PTHR11716">
    <property type="entry name" value="PHOSPHOLIPASE A2 FAMILY MEMBER"/>
    <property type="match status" value="1"/>
</dbReference>
<dbReference type="PANTHER" id="PTHR11716:SF9">
    <property type="entry name" value="PHOSPHOLIPASE A2, MEMBRANE ASSOCIATED"/>
    <property type="match status" value="1"/>
</dbReference>
<dbReference type="Pfam" id="PF00068">
    <property type="entry name" value="Phospholip_A2_1"/>
    <property type="match status" value="1"/>
</dbReference>
<dbReference type="PRINTS" id="PR00389">
    <property type="entry name" value="PHPHLIPASEA2"/>
</dbReference>
<dbReference type="SMART" id="SM00085">
    <property type="entry name" value="PA2c"/>
    <property type="match status" value="1"/>
</dbReference>
<dbReference type="SUPFAM" id="SSF48619">
    <property type="entry name" value="Phospholipase A2, PLA2"/>
    <property type="match status" value="1"/>
</dbReference>
<dbReference type="PROSITE" id="PS00119">
    <property type="entry name" value="PA2_ASP"/>
    <property type="match status" value="1"/>
</dbReference>
<dbReference type="PROSITE" id="PS00118">
    <property type="entry name" value="PA2_HIS"/>
    <property type="match status" value="1"/>
</dbReference>
<name>PA2A8_GLOHA</name>
<keyword id="KW-0106">Calcium</keyword>
<keyword id="KW-1015">Disulfide bond</keyword>
<keyword id="KW-0378">Hydrolase</keyword>
<keyword id="KW-0442">Lipid degradation</keyword>
<keyword id="KW-0443">Lipid metabolism</keyword>
<keyword id="KW-0479">Metal-binding</keyword>
<keyword id="KW-0964">Secreted</keyword>
<feature type="chain" id="PRO_0000161603" description="Acidic phospholipase A2 A'">
    <location>
        <begin position="1"/>
        <end position="122"/>
    </location>
</feature>
<feature type="active site" evidence="3">
    <location>
        <position position="47"/>
    </location>
</feature>
<feature type="active site" evidence="3">
    <location>
        <position position="89"/>
    </location>
</feature>
<feature type="binding site" evidence="2">
    <location>
        <position position="27"/>
    </location>
    <ligand>
        <name>Ca(2+)</name>
        <dbReference type="ChEBI" id="CHEBI:29108"/>
    </ligand>
</feature>
<feature type="binding site" evidence="2">
    <location>
        <position position="29"/>
    </location>
    <ligand>
        <name>Ca(2+)</name>
        <dbReference type="ChEBI" id="CHEBI:29108"/>
    </ligand>
</feature>
<feature type="binding site" evidence="2">
    <location>
        <position position="31"/>
    </location>
    <ligand>
        <name>Ca(2+)</name>
        <dbReference type="ChEBI" id="CHEBI:29108"/>
    </ligand>
</feature>
<feature type="binding site" evidence="2">
    <location>
        <position position="48"/>
    </location>
    <ligand>
        <name>Ca(2+)</name>
        <dbReference type="ChEBI" id="CHEBI:29108"/>
    </ligand>
</feature>
<feature type="disulfide bond" evidence="2">
    <location>
        <begin position="26"/>
        <end position="115"/>
    </location>
</feature>
<feature type="disulfide bond" evidence="2">
    <location>
        <begin position="28"/>
        <end position="44"/>
    </location>
</feature>
<feature type="disulfide bond" evidence="2">
    <location>
        <begin position="43"/>
        <end position="95"/>
    </location>
</feature>
<feature type="disulfide bond" evidence="2">
    <location>
        <begin position="49"/>
        <end position="122"/>
    </location>
</feature>
<feature type="disulfide bond" evidence="2">
    <location>
        <begin position="50"/>
        <end position="88"/>
    </location>
</feature>
<feature type="disulfide bond" evidence="2">
    <location>
        <begin position="57"/>
        <end position="81"/>
    </location>
</feature>
<feature type="disulfide bond" evidence="2">
    <location>
        <begin position="75"/>
        <end position="86"/>
    </location>
</feature>
<reference key="1">
    <citation type="journal article" date="1998" name="Toxicon">
        <title>Diversity of cDNAs encoding phospholipase A2 from Agkistrodon halys pallas venom, and its expression in E. coli.</title>
        <authorList>
            <person name="Pan H."/>
            <person name="Liu X.-L."/>
            <person name="Ou-Yang L.-L."/>
            <person name="Yang G.-Z."/>
            <person name="Zhou Y.-C."/>
            <person name="Li Z.-P."/>
            <person name="Wu X.-F."/>
        </authorList>
    </citation>
    <scope>NUCLEOTIDE SEQUENCE [MRNA]</scope>
    <source>
        <tissue>Venom gland</tissue>
    </source>
</reference>
<accession>O42192</accession>
<sequence length="122" mass="13666">SLMQFKTLIMKIAGRSGIWYYGSYGCYCGGGGQGRPQDASDRCCFVHDCCYGKVTGCNPKMDVYTYTEENGAIVCGGDDPCKKQICECDKDAAICFRDNIDTYDNKYWFFPAKNCQEESEPC</sequence>
<protein>
    <recommendedName>
        <fullName>Acidic phospholipase A2 A'</fullName>
        <shortName>svPLA2</shortName>
        <ecNumber>3.1.1.4</ecNumber>
    </recommendedName>
    <alternativeName>
        <fullName>Phosphatidylcholine 2-acylhydrolase</fullName>
    </alternativeName>
</protein>
<evidence type="ECO:0000250" key="1"/>
<evidence type="ECO:0000250" key="2">
    <source>
        <dbReference type="UniProtKB" id="O42191"/>
    </source>
</evidence>
<evidence type="ECO:0000250" key="3">
    <source>
        <dbReference type="UniProtKB" id="P06859"/>
    </source>
</evidence>
<evidence type="ECO:0000255" key="4">
    <source>
        <dbReference type="PROSITE-ProRule" id="PRU10035"/>
    </source>
</evidence>
<evidence type="ECO:0000255" key="5">
    <source>
        <dbReference type="PROSITE-ProRule" id="PRU10036"/>
    </source>
</evidence>
<evidence type="ECO:0000305" key="6"/>
<comment type="function">
    <text evidence="1">PLA2 catalyzes the calcium-dependent hydrolysis of the 2-acyl groups in 3-sn-phosphoglycerides.</text>
</comment>
<comment type="catalytic activity">
    <reaction evidence="4 5">
        <text>a 1,2-diacyl-sn-glycero-3-phosphocholine + H2O = a 1-acyl-sn-glycero-3-phosphocholine + a fatty acid + H(+)</text>
        <dbReference type="Rhea" id="RHEA:15801"/>
        <dbReference type="ChEBI" id="CHEBI:15377"/>
        <dbReference type="ChEBI" id="CHEBI:15378"/>
        <dbReference type="ChEBI" id="CHEBI:28868"/>
        <dbReference type="ChEBI" id="CHEBI:57643"/>
        <dbReference type="ChEBI" id="CHEBI:58168"/>
        <dbReference type="EC" id="3.1.1.4"/>
    </reaction>
</comment>
<comment type="cofactor">
    <cofactor evidence="1">
        <name>Ca(2+)</name>
        <dbReference type="ChEBI" id="CHEBI:29108"/>
    </cofactor>
    <text evidence="1">Binds 1 Ca(2+) ion.</text>
</comment>
<comment type="subcellular location">
    <subcellularLocation>
        <location evidence="1">Secreted</location>
    </subcellularLocation>
</comment>
<comment type="tissue specificity">
    <text>Expressed by the venom gland.</text>
</comment>
<comment type="similarity">
    <text evidence="6">Belongs to the phospholipase A2 family. Group II subfamily. D49 sub-subfamily.</text>
</comment>
<organism>
    <name type="scientific">Gloydius halys</name>
    <name type="common">Chinese water mocassin</name>
    <name type="synonym">Agkistrodon halys</name>
    <dbReference type="NCBI Taxonomy" id="8714"/>
    <lineage>
        <taxon>Eukaryota</taxon>
        <taxon>Metazoa</taxon>
        <taxon>Chordata</taxon>
        <taxon>Craniata</taxon>
        <taxon>Vertebrata</taxon>
        <taxon>Euteleostomi</taxon>
        <taxon>Lepidosauria</taxon>
        <taxon>Squamata</taxon>
        <taxon>Bifurcata</taxon>
        <taxon>Unidentata</taxon>
        <taxon>Episquamata</taxon>
        <taxon>Toxicofera</taxon>
        <taxon>Serpentes</taxon>
        <taxon>Colubroidea</taxon>
        <taxon>Viperidae</taxon>
        <taxon>Crotalinae</taxon>
        <taxon>Gloydius</taxon>
    </lineage>
</organism>
<proteinExistence type="evidence at transcript level"/>